<accession>B7LC01</accession>
<keyword id="KW-0143">Chaperone</keyword>
<keyword id="KW-0963">Cytoplasm</keyword>
<keyword id="KW-1185">Reference proteome</keyword>
<gene>
    <name evidence="1" type="primary">groES</name>
    <name evidence="1" type="synonym">groS</name>
    <name type="ordered locus">EC55989_4697</name>
</gene>
<name>CH10_ECO55</name>
<evidence type="ECO:0000255" key="1">
    <source>
        <dbReference type="HAMAP-Rule" id="MF_00580"/>
    </source>
</evidence>
<organism>
    <name type="scientific">Escherichia coli (strain 55989 / EAEC)</name>
    <dbReference type="NCBI Taxonomy" id="585055"/>
    <lineage>
        <taxon>Bacteria</taxon>
        <taxon>Pseudomonadati</taxon>
        <taxon>Pseudomonadota</taxon>
        <taxon>Gammaproteobacteria</taxon>
        <taxon>Enterobacterales</taxon>
        <taxon>Enterobacteriaceae</taxon>
        <taxon>Escherichia</taxon>
    </lineage>
</organism>
<comment type="function">
    <text evidence="1">Together with the chaperonin GroEL, plays an essential role in assisting protein folding. The GroEL-GroES system forms a nano-cage that allows encapsulation of the non-native substrate proteins and provides a physical environment optimized to promote and accelerate protein folding. GroES binds to the apical surface of the GroEL ring, thereby capping the opening of the GroEL channel.</text>
</comment>
<comment type="subunit">
    <text evidence="1">Heptamer of 7 subunits arranged in a ring. Interacts with the chaperonin GroEL.</text>
</comment>
<comment type="subcellular location">
    <subcellularLocation>
        <location evidence="1">Cytoplasm</location>
    </subcellularLocation>
</comment>
<comment type="similarity">
    <text evidence="1">Belongs to the GroES chaperonin family.</text>
</comment>
<proteinExistence type="inferred from homology"/>
<reference key="1">
    <citation type="journal article" date="2009" name="PLoS Genet.">
        <title>Organised genome dynamics in the Escherichia coli species results in highly diverse adaptive paths.</title>
        <authorList>
            <person name="Touchon M."/>
            <person name="Hoede C."/>
            <person name="Tenaillon O."/>
            <person name="Barbe V."/>
            <person name="Baeriswyl S."/>
            <person name="Bidet P."/>
            <person name="Bingen E."/>
            <person name="Bonacorsi S."/>
            <person name="Bouchier C."/>
            <person name="Bouvet O."/>
            <person name="Calteau A."/>
            <person name="Chiapello H."/>
            <person name="Clermont O."/>
            <person name="Cruveiller S."/>
            <person name="Danchin A."/>
            <person name="Diard M."/>
            <person name="Dossat C."/>
            <person name="Karoui M.E."/>
            <person name="Frapy E."/>
            <person name="Garry L."/>
            <person name="Ghigo J.M."/>
            <person name="Gilles A.M."/>
            <person name="Johnson J."/>
            <person name="Le Bouguenec C."/>
            <person name="Lescat M."/>
            <person name="Mangenot S."/>
            <person name="Martinez-Jehanne V."/>
            <person name="Matic I."/>
            <person name="Nassif X."/>
            <person name="Oztas S."/>
            <person name="Petit M.A."/>
            <person name="Pichon C."/>
            <person name="Rouy Z."/>
            <person name="Ruf C.S."/>
            <person name="Schneider D."/>
            <person name="Tourret J."/>
            <person name="Vacherie B."/>
            <person name="Vallenet D."/>
            <person name="Medigue C."/>
            <person name="Rocha E.P.C."/>
            <person name="Denamur E."/>
        </authorList>
    </citation>
    <scope>NUCLEOTIDE SEQUENCE [LARGE SCALE GENOMIC DNA]</scope>
    <source>
        <strain>55989 / EAEC</strain>
    </source>
</reference>
<feature type="chain" id="PRO_1000146904" description="Co-chaperonin GroES">
    <location>
        <begin position="1"/>
        <end position="97"/>
    </location>
</feature>
<dbReference type="EMBL" id="CU928145">
    <property type="protein sequence ID" value="CAV01593.1"/>
    <property type="molecule type" value="Genomic_DNA"/>
</dbReference>
<dbReference type="RefSeq" id="WP_001026276.1">
    <property type="nucleotide sequence ID" value="NZ_CP028304.1"/>
</dbReference>
<dbReference type="SMR" id="B7LC01"/>
<dbReference type="KEGG" id="eck:EC55989_4697"/>
<dbReference type="HOGENOM" id="CLU_132825_1_1_6"/>
<dbReference type="Proteomes" id="UP000000746">
    <property type="component" value="Chromosome"/>
</dbReference>
<dbReference type="GO" id="GO:0005737">
    <property type="term" value="C:cytoplasm"/>
    <property type="evidence" value="ECO:0007669"/>
    <property type="project" value="UniProtKB-SubCell"/>
</dbReference>
<dbReference type="GO" id="GO:0005524">
    <property type="term" value="F:ATP binding"/>
    <property type="evidence" value="ECO:0007669"/>
    <property type="project" value="InterPro"/>
</dbReference>
<dbReference type="GO" id="GO:0046872">
    <property type="term" value="F:metal ion binding"/>
    <property type="evidence" value="ECO:0007669"/>
    <property type="project" value="TreeGrafter"/>
</dbReference>
<dbReference type="GO" id="GO:0044183">
    <property type="term" value="F:protein folding chaperone"/>
    <property type="evidence" value="ECO:0007669"/>
    <property type="project" value="InterPro"/>
</dbReference>
<dbReference type="GO" id="GO:0051087">
    <property type="term" value="F:protein-folding chaperone binding"/>
    <property type="evidence" value="ECO:0007669"/>
    <property type="project" value="TreeGrafter"/>
</dbReference>
<dbReference type="GO" id="GO:0051082">
    <property type="term" value="F:unfolded protein binding"/>
    <property type="evidence" value="ECO:0007669"/>
    <property type="project" value="TreeGrafter"/>
</dbReference>
<dbReference type="GO" id="GO:0051085">
    <property type="term" value="P:chaperone cofactor-dependent protein refolding"/>
    <property type="evidence" value="ECO:0007669"/>
    <property type="project" value="TreeGrafter"/>
</dbReference>
<dbReference type="CDD" id="cd00320">
    <property type="entry name" value="cpn10"/>
    <property type="match status" value="1"/>
</dbReference>
<dbReference type="FunFam" id="2.30.33.40:FF:000001">
    <property type="entry name" value="10 kDa chaperonin"/>
    <property type="match status" value="1"/>
</dbReference>
<dbReference type="Gene3D" id="2.30.33.40">
    <property type="entry name" value="GroES chaperonin"/>
    <property type="match status" value="1"/>
</dbReference>
<dbReference type="HAMAP" id="MF_00580">
    <property type="entry name" value="CH10"/>
    <property type="match status" value="1"/>
</dbReference>
<dbReference type="InterPro" id="IPR020818">
    <property type="entry name" value="Chaperonin_GroES"/>
</dbReference>
<dbReference type="InterPro" id="IPR037124">
    <property type="entry name" value="Chaperonin_GroES_sf"/>
</dbReference>
<dbReference type="InterPro" id="IPR018369">
    <property type="entry name" value="Chaprnonin_Cpn10_CS"/>
</dbReference>
<dbReference type="InterPro" id="IPR011032">
    <property type="entry name" value="GroES-like_sf"/>
</dbReference>
<dbReference type="NCBIfam" id="NF001526">
    <property type="entry name" value="PRK00364.1-1"/>
    <property type="match status" value="1"/>
</dbReference>
<dbReference type="NCBIfam" id="NF001527">
    <property type="entry name" value="PRK00364.1-2"/>
    <property type="match status" value="1"/>
</dbReference>
<dbReference type="NCBIfam" id="NF001531">
    <property type="entry name" value="PRK00364.2-2"/>
    <property type="match status" value="1"/>
</dbReference>
<dbReference type="PANTHER" id="PTHR10772">
    <property type="entry name" value="10 KDA HEAT SHOCK PROTEIN"/>
    <property type="match status" value="1"/>
</dbReference>
<dbReference type="PANTHER" id="PTHR10772:SF58">
    <property type="entry name" value="CO-CHAPERONIN GROES"/>
    <property type="match status" value="1"/>
</dbReference>
<dbReference type="Pfam" id="PF00166">
    <property type="entry name" value="Cpn10"/>
    <property type="match status" value="1"/>
</dbReference>
<dbReference type="PRINTS" id="PR00297">
    <property type="entry name" value="CHAPERONIN10"/>
</dbReference>
<dbReference type="SMART" id="SM00883">
    <property type="entry name" value="Cpn10"/>
    <property type="match status" value="1"/>
</dbReference>
<dbReference type="SUPFAM" id="SSF50129">
    <property type="entry name" value="GroES-like"/>
    <property type="match status" value="1"/>
</dbReference>
<dbReference type="PROSITE" id="PS00681">
    <property type="entry name" value="CHAPERONINS_CPN10"/>
    <property type="match status" value="1"/>
</dbReference>
<sequence>MNIRPLHDRVIVKRKEVETKSAGGIVLTGSAAAKSTRGEVLAVGNGRILENGEVKPLDVKVGDIVIFNDGYGVKSEKIDNEEVLIMSESDILAIVEA</sequence>
<protein>
    <recommendedName>
        <fullName evidence="1">Co-chaperonin GroES</fullName>
    </recommendedName>
    <alternativeName>
        <fullName evidence="1">10 kDa chaperonin</fullName>
    </alternativeName>
    <alternativeName>
        <fullName evidence="1">Chaperonin-10</fullName>
        <shortName evidence="1">Cpn10</shortName>
    </alternativeName>
</protein>